<protein>
    <recommendedName>
        <fullName>Homeobox protein Hox-C11</fullName>
    </recommendedName>
    <alternativeName>
        <fullName>Homeobox protein Hox-3.7</fullName>
    </alternativeName>
</protein>
<proteinExistence type="evidence at transcript level"/>
<gene>
    <name type="primary">Hoxc11</name>
    <name type="synonym">Hox-3.7</name>
    <name type="synonym">Hoxc-11</name>
</gene>
<dbReference type="EMBL" id="AC160979">
    <property type="status" value="NOT_ANNOTATED_CDS"/>
    <property type="molecule type" value="Genomic_DNA"/>
</dbReference>
<dbReference type="EMBL" id="CH466550">
    <property type="protein sequence ID" value="EDL03950.1"/>
    <property type="molecule type" value="Genomic_DNA"/>
</dbReference>
<dbReference type="EMBL" id="BC139233">
    <property type="protein sequence ID" value="AAI39234.1"/>
    <property type="molecule type" value="mRNA"/>
</dbReference>
<dbReference type="EMBL" id="BC139269">
    <property type="protein sequence ID" value="AAI39270.1"/>
    <property type="molecule type" value="mRNA"/>
</dbReference>
<dbReference type="CCDS" id="CCDS27892.1"/>
<dbReference type="PIR" id="I37290">
    <property type="entry name" value="I37290"/>
</dbReference>
<dbReference type="RefSeq" id="NP_001020013.1">
    <property type="nucleotide sequence ID" value="NM_001024842.1"/>
</dbReference>
<dbReference type="SMR" id="P31313"/>
<dbReference type="BioGRID" id="224942">
    <property type="interactions" value="1"/>
</dbReference>
<dbReference type="FunCoup" id="P31313">
    <property type="interactions" value="1867"/>
</dbReference>
<dbReference type="STRING" id="10090.ENSMUSP00000001701"/>
<dbReference type="PhosphoSitePlus" id="P31313"/>
<dbReference type="PaxDb" id="10090-ENSMUSP00000001701"/>
<dbReference type="ProteomicsDB" id="266932"/>
<dbReference type="Antibodypedia" id="15309">
    <property type="antibodies" value="322 antibodies from 28 providers"/>
</dbReference>
<dbReference type="Ensembl" id="ENSMUST00000001701.4">
    <property type="protein sequence ID" value="ENSMUSP00000001701.4"/>
    <property type="gene ID" value="ENSMUSG00000001656.4"/>
</dbReference>
<dbReference type="GeneID" id="109663"/>
<dbReference type="KEGG" id="mmu:109663"/>
<dbReference type="UCSC" id="uc007xwy.1">
    <property type="organism name" value="mouse"/>
</dbReference>
<dbReference type="AGR" id="MGI:96193"/>
<dbReference type="CTD" id="3227"/>
<dbReference type="MGI" id="MGI:96193">
    <property type="gene designation" value="Hoxc11"/>
</dbReference>
<dbReference type="VEuPathDB" id="HostDB:ENSMUSG00000001656"/>
<dbReference type="eggNOG" id="KOG0487">
    <property type="taxonomic scope" value="Eukaryota"/>
</dbReference>
<dbReference type="GeneTree" id="ENSGT00940000160009"/>
<dbReference type="HOGENOM" id="CLU_079662_0_0_1"/>
<dbReference type="InParanoid" id="P31313"/>
<dbReference type="OMA" id="NESAYGH"/>
<dbReference type="OrthoDB" id="6159439at2759"/>
<dbReference type="PhylomeDB" id="P31313"/>
<dbReference type="TreeFam" id="TF350668"/>
<dbReference type="BioGRID-ORCS" id="109663">
    <property type="hits" value="2 hits in 79 CRISPR screens"/>
</dbReference>
<dbReference type="PRO" id="PR:P31313"/>
<dbReference type="Proteomes" id="UP000000589">
    <property type="component" value="Chromosome 15"/>
</dbReference>
<dbReference type="RNAct" id="P31313">
    <property type="molecule type" value="protein"/>
</dbReference>
<dbReference type="Bgee" id="ENSMUSG00000001656">
    <property type="expression patterns" value="Expressed in embryonic post-anal tail and 35 other cell types or tissues"/>
</dbReference>
<dbReference type="GO" id="GO:0005829">
    <property type="term" value="C:cytosol"/>
    <property type="evidence" value="ECO:0007669"/>
    <property type="project" value="Ensembl"/>
</dbReference>
<dbReference type="GO" id="GO:0005654">
    <property type="term" value="C:nucleoplasm"/>
    <property type="evidence" value="ECO:0000304"/>
    <property type="project" value="Reactome"/>
</dbReference>
<dbReference type="GO" id="GO:0001228">
    <property type="term" value="F:DNA-binding transcription activator activity, RNA polymerase II-specific"/>
    <property type="evidence" value="ECO:0007669"/>
    <property type="project" value="Ensembl"/>
</dbReference>
<dbReference type="GO" id="GO:0000978">
    <property type="term" value="F:RNA polymerase II cis-regulatory region sequence-specific DNA binding"/>
    <property type="evidence" value="ECO:0007669"/>
    <property type="project" value="Ensembl"/>
</dbReference>
<dbReference type="GO" id="GO:0009952">
    <property type="term" value="P:anterior/posterior pattern specification"/>
    <property type="evidence" value="ECO:0000316"/>
    <property type="project" value="MGI"/>
</dbReference>
<dbReference type="GO" id="GO:0042733">
    <property type="term" value="P:embryonic digit morphogenesis"/>
    <property type="evidence" value="ECO:0000316"/>
    <property type="project" value="MGI"/>
</dbReference>
<dbReference type="GO" id="GO:0060272">
    <property type="term" value="P:embryonic skeletal joint morphogenesis"/>
    <property type="evidence" value="ECO:0000316"/>
    <property type="project" value="MGI"/>
</dbReference>
<dbReference type="GO" id="GO:0001656">
    <property type="term" value="P:metanephros development"/>
    <property type="evidence" value="ECO:0000316"/>
    <property type="project" value="MGI"/>
</dbReference>
<dbReference type="GO" id="GO:0001759">
    <property type="term" value="P:organ induction"/>
    <property type="evidence" value="ECO:0000316"/>
    <property type="project" value="MGI"/>
</dbReference>
<dbReference type="GO" id="GO:0009954">
    <property type="term" value="P:proximal/distal pattern formation"/>
    <property type="evidence" value="ECO:0000316"/>
    <property type="project" value="MGI"/>
</dbReference>
<dbReference type="GO" id="GO:0001501">
    <property type="term" value="P:skeletal system development"/>
    <property type="evidence" value="ECO:0000316"/>
    <property type="project" value="MGI"/>
</dbReference>
<dbReference type="CDD" id="cd00086">
    <property type="entry name" value="homeodomain"/>
    <property type="match status" value="1"/>
</dbReference>
<dbReference type="FunFam" id="1.10.10.60:FF:000166">
    <property type="entry name" value="homeobox protein Hox-C11"/>
    <property type="match status" value="1"/>
</dbReference>
<dbReference type="Gene3D" id="1.10.10.60">
    <property type="entry name" value="Homeodomain-like"/>
    <property type="match status" value="1"/>
</dbReference>
<dbReference type="InterPro" id="IPR021918">
    <property type="entry name" value="DUF3528"/>
</dbReference>
<dbReference type="InterPro" id="IPR001356">
    <property type="entry name" value="HD"/>
</dbReference>
<dbReference type="InterPro" id="IPR020479">
    <property type="entry name" value="HD_metazoa"/>
</dbReference>
<dbReference type="InterPro" id="IPR017970">
    <property type="entry name" value="Homeobox_CS"/>
</dbReference>
<dbReference type="InterPro" id="IPR009057">
    <property type="entry name" value="Homeodomain-like_sf"/>
</dbReference>
<dbReference type="PANTHER" id="PTHR46092">
    <property type="entry name" value="HOMEOBOX PROTEIN HOX-A11-RELATED"/>
    <property type="match status" value="1"/>
</dbReference>
<dbReference type="PANTHER" id="PTHR46092:SF1">
    <property type="entry name" value="HOMEOBOX PROTEIN HOX-C11"/>
    <property type="match status" value="1"/>
</dbReference>
<dbReference type="Pfam" id="PF12045">
    <property type="entry name" value="DUF3528"/>
    <property type="match status" value="1"/>
</dbReference>
<dbReference type="Pfam" id="PF00046">
    <property type="entry name" value="Homeodomain"/>
    <property type="match status" value="1"/>
</dbReference>
<dbReference type="PRINTS" id="PR00024">
    <property type="entry name" value="HOMEOBOX"/>
</dbReference>
<dbReference type="SMART" id="SM00389">
    <property type="entry name" value="HOX"/>
    <property type="match status" value="1"/>
</dbReference>
<dbReference type="SUPFAM" id="SSF46689">
    <property type="entry name" value="Homeodomain-like"/>
    <property type="match status" value="1"/>
</dbReference>
<dbReference type="PROSITE" id="PS00027">
    <property type="entry name" value="HOMEOBOX_1"/>
    <property type="match status" value="1"/>
</dbReference>
<dbReference type="PROSITE" id="PS50071">
    <property type="entry name" value="HOMEOBOX_2"/>
    <property type="match status" value="1"/>
</dbReference>
<evidence type="ECO:0000250" key="1">
    <source>
        <dbReference type="UniProtKB" id="O43248"/>
    </source>
</evidence>
<evidence type="ECO:0000255" key="2">
    <source>
        <dbReference type="PROSITE-ProRule" id="PRU00108"/>
    </source>
</evidence>
<evidence type="ECO:0000256" key="3">
    <source>
        <dbReference type="SAM" id="MobiDB-lite"/>
    </source>
</evidence>
<evidence type="ECO:0000305" key="4"/>
<organism>
    <name type="scientific">Mus musculus</name>
    <name type="common">Mouse</name>
    <dbReference type="NCBI Taxonomy" id="10090"/>
    <lineage>
        <taxon>Eukaryota</taxon>
        <taxon>Metazoa</taxon>
        <taxon>Chordata</taxon>
        <taxon>Craniata</taxon>
        <taxon>Vertebrata</taxon>
        <taxon>Euteleostomi</taxon>
        <taxon>Mammalia</taxon>
        <taxon>Eutheria</taxon>
        <taxon>Euarchontoglires</taxon>
        <taxon>Glires</taxon>
        <taxon>Rodentia</taxon>
        <taxon>Myomorpha</taxon>
        <taxon>Muroidea</taxon>
        <taxon>Muridae</taxon>
        <taxon>Murinae</taxon>
        <taxon>Mus</taxon>
        <taxon>Mus</taxon>
    </lineage>
</organism>
<feature type="chain" id="PRO_0000200195" description="Homeobox protein Hox-C11">
    <location>
        <begin position="1"/>
        <end position="304"/>
    </location>
</feature>
<feature type="DNA-binding region" description="Homeobox" evidence="2">
    <location>
        <begin position="232"/>
        <end position="291"/>
    </location>
</feature>
<feature type="region of interest" description="Disordered" evidence="3">
    <location>
        <begin position="167"/>
        <end position="237"/>
    </location>
</feature>
<feature type="cross-link" description="Glycyl lysine isopeptide (Lys-Gly) (interchain with G-Cter in SUMO2)" evidence="1">
    <location>
        <position position="82"/>
    </location>
</feature>
<feature type="cross-link" description="Glycyl lysine isopeptide (Lys-Gly) (interchain with G-Cter in SUMO2)" evidence="1">
    <location>
        <position position="116"/>
    </location>
</feature>
<feature type="cross-link" description="Glycyl lysine isopeptide (Lys-Gly) (interchain with G-Cter in SUMO2)" evidence="1">
    <location>
        <position position="178"/>
    </location>
</feature>
<keyword id="KW-0217">Developmental protein</keyword>
<keyword id="KW-0238">DNA-binding</keyword>
<keyword id="KW-0371">Homeobox</keyword>
<keyword id="KW-1017">Isopeptide bond</keyword>
<keyword id="KW-0539">Nucleus</keyword>
<keyword id="KW-1185">Reference proteome</keyword>
<keyword id="KW-0804">Transcription</keyword>
<keyword id="KW-0805">Transcription regulation</keyword>
<keyword id="KW-0832">Ubl conjugation</keyword>
<accession>P31313</accession>
<accession>B9EI74</accession>
<reference key="1">
    <citation type="journal article" date="2009" name="PLoS Biol.">
        <title>Lineage-specific biology revealed by a finished genome assembly of the mouse.</title>
        <authorList>
            <person name="Church D.M."/>
            <person name="Goodstadt L."/>
            <person name="Hillier L.W."/>
            <person name="Zody M.C."/>
            <person name="Goldstein S."/>
            <person name="She X."/>
            <person name="Bult C.J."/>
            <person name="Agarwala R."/>
            <person name="Cherry J.L."/>
            <person name="DiCuccio M."/>
            <person name="Hlavina W."/>
            <person name="Kapustin Y."/>
            <person name="Meric P."/>
            <person name="Maglott D."/>
            <person name="Birtle Z."/>
            <person name="Marques A.C."/>
            <person name="Graves T."/>
            <person name="Zhou S."/>
            <person name="Teague B."/>
            <person name="Potamousis K."/>
            <person name="Churas C."/>
            <person name="Place M."/>
            <person name="Herschleb J."/>
            <person name="Runnheim R."/>
            <person name="Forrest D."/>
            <person name="Amos-Landgraf J."/>
            <person name="Schwartz D.C."/>
            <person name="Cheng Z."/>
            <person name="Lindblad-Toh K."/>
            <person name="Eichler E.E."/>
            <person name="Ponting C.P."/>
        </authorList>
    </citation>
    <scope>NUCLEOTIDE SEQUENCE [LARGE SCALE GENOMIC DNA]</scope>
    <source>
        <strain>C57BL/6J</strain>
    </source>
</reference>
<reference key="2">
    <citation type="submission" date="2005-07" db="EMBL/GenBank/DDBJ databases">
        <authorList>
            <person name="Mural R.J."/>
            <person name="Adams M.D."/>
            <person name="Myers E.W."/>
            <person name="Smith H.O."/>
            <person name="Venter J.C."/>
        </authorList>
    </citation>
    <scope>NUCLEOTIDE SEQUENCE [LARGE SCALE GENOMIC DNA]</scope>
</reference>
<reference key="3">
    <citation type="journal article" date="2004" name="Genome Res.">
        <title>The status, quality, and expansion of the NIH full-length cDNA project: the Mammalian Gene Collection (MGC).</title>
        <authorList>
            <consortium name="The MGC Project Team"/>
        </authorList>
    </citation>
    <scope>NUCLEOTIDE SEQUENCE [LARGE SCALE MRNA]</scope>
    <source>
        <tissue>Brain</tissue>
    </source>
</reference>
<reference key="4">
    <citation type="journal article" date="1991" name="Proc. Natl. Acad. Sci. U.S.A.">
        <title>Identification of 10 murine homeobox genes.</title>
        <authorList>
            <person name="Singh G."/>
            <person name="Kaur S."/>
            <person name="Stock J.L."/>
            <person name="Jenkins N.A."/>
            <person name="Gilbert D.J."/>
            <person name="Copeland N.G."/>
            <person name="Potter S.S."/>
        </authorList>
    </citation>
    <scope>NUCLEOTIDE SEQUENCE OF 232-291</scope>
</reference>
<sequence length="304" mass="33708">MFNSVNLGNFCSPSRKERGADFGERGSCTSNLYLPSCTYYVPEFSTVSSFLPQAPSRQISYPYSAQVPPVREVSYGLEPSGKWHHRNSYSSCYAAADELMHRECLPPSTVTEILMKNEGSYGGHHHPSAPHAAPAGFYSSVNKNSVLPQAFDRFFDNAYCGGGDAPAEPPCSGKGEAKGEPEAPPASGLASRAEAGAEAEAEEENTNPSSSGSSHSATKEPAKGAAPNAPRTRKKRCPYSKFQIRELEREFFFNVYINKEKRLQLSRMLNLTDRQVKIWFQNRRMKEKKLSRDRLQYFSGNPLL</sequence>
<comment type="function">
    <text>Sequence-specific transcription factor which is part of a developmental regulatory system that provides cells with specific positional identities on the anterior-posterior axis.</text>
</comment>
<comment type="subcellular location">
    <subcellularLocation>
        <location>Nucleus</location>
    </subcellularLocation>
</comment>
<comment type="similarity">
    <text evidence="4">Belongs to the Abd-B homeobox family.</text>
</comment>
<name>HXC11_MOUSE</name>